<keyword id="KW-0548">Nucleotidyltransferase</keyword>
<keyword id="KW-1185">Reference proteome</keyword>
<keyword id="KW-0694">RNA-binding</keyword>
<keyword id="KW-0698">rRNA processing</keyword>
<keyword id="KW-0808">Transferase</keyword>
<keyword id="KW-0819">tRNA processing</keyword>
<keyword id="KW-0820">tRNA-binding</keyword>
<name>RNPH_PSYIN</name>
<accession>A1T097</accession>
<gene>
    <name evidence="1" type="primary">rph</name>
    <name type="ordered locus">Ping_3479</name>
</gene>
<feature type="chain" id="PRO_1000024858" description="Ribonuclease PH">
    <location>
        <begin position="1"/>
        <end position="239"/>
    </location>
</feature>
<feature type="binding site" evidence="1">
    <location>
        <position position="86"/>
    </location>
    <ligand>
        <name>phosphate</name>
        <dbReference type="ChEBI" id="CHEBI:43474"/>
        <note>substrate</note>
    </ligand>
</feature>
<feature type="binding site" evidence="1">
    <location>
        <begin position="124"/>
        <end position="126"/>
    </location>
    <ligand>
        <name>phosphate</name>
        <dbReference type="ChEBI" id="CHEBI:43474"/>
        <note>substrate</note>
    </ligand>
</feature>
<proteinExistence type="inferred from homology"/>
<evidence type="ECO:0000255" key="1">
    <source>
        <dbReference type="HAMAP-Rule" id="MF_00564"/>
    </source>
</evidence>
<protein>
    <recommendedName>
        <fullName evidence="1">Ribonuclease PH</fullName>
        <shortName evidence="1">RNase PH</shortName>
        <ecNumber evidence="1">2.7.7.56</ecNumber>
    </recommendedName>
    <alternativeName>
        <fullName evidence="1">tRNA nucleotidyltransferase</fullName>
    </alternativeName>
</protein>
<dbReference type="EC" id="2.7.7.56" evidence="1"/>
<dbReference type="EMBL" id="CP000510">
    <property type="protein sequence ID" value="ABM05162.1"/>
    <property type="molecule type" value="Genomic_DNA"/>
</dbReference>
<dbReference type="RefSeq" id="WP_011771714.1">
    <property type="nucleotide sequence ID" value="NC_008709.1"/>
</dbReference>
<dbReference type="SMR" id="A1T097"/>
<dbReference type="STRING" id="357804.Ping_3479"/>
<dbReference type="KEGG" id="pin:Ping_3479"/>
<dbReference type="eggNOG" id="COG0689">
    <property type="taxonomic scope" value="Bacteria"/>
</dbReference>
<dbReference type="HOGENOM" id="CLU_050858_0_0_6"/>
<dbReference type="OrthoDB" id="9802265at2"/>
<dbReference type="Proteomes" id="UP000000639">
    <property type="component" value="Chromosome"/>
</dbReference>
<dbReference type="GO" id="GO:0000175">
    <property type="term" value="F:3'-5'-RNA exonuclease activity"/>
    <property type="evidence" value="ECO:0007669"/>
    <property type="project" value="UniProtKB-UniRule"/>
</dbReference>
<dbReference type="GO" id="GO:0000049">
    <property type="term" value="F:tRNA binding"/>
    <property type="evidence" value="ECO:0007669"/>
    <property type="project" value="UniProtKB-UniRule"/>
</dbReference>
<dbReference type="GO" id="GO:0009022">
    <property type="term" value="F:tRNA nucleotidyltransferase activity"/>
    <property type="evidence" value="ECO:0007669"/>
    <property type="project" value="UniProtKB-UniRule"/>
</dbReference>
<dbReference type="GO" id="GO:0016075">
    <property type="term" value="P:rRNA catabolic process"/>
    <property type="evidence" value="ECO:0007669"/>
    <property type="project" value="UniProtKB-UniRule"/>
</dbReference>
<dbReference type="GO" id="GO:0006364">
    <property type="term" value="P:rRNA processing"/>
    <property type="evidence" value="ECO:0007669"/>
    <property type="project" value="UniProtKB-KW"/>
</dbReference>
<dbReference type="GO" id="GO:0008033">
    <property type="term" value="P:tRNA processing"/>
    <property type="evidence" value="ECO:0007669"/>
    <property type="project" value="UniProtKB-UniRule"/>
</dbReference>
<dbReference type="CDD" id="cd11362">
    <property type="entry name" value="RNase_PH_bact"/>
    <property type="match status" value="1"/>
</dbReference>
<dbReference type="FunFam" id="3.30.230.70:FF:000003">
    <property type="entry name" value="Ribonuclease PH"/>
    <property type="match status" value="1"/>
</dbReference>
<dbReference type="Gene3D" id="3.30.230.70">
    <property type="entry name" value="GHMP Kinase, N-terminal domain"/>
    <property type="match status" value="1"/>
</dbReference>
<dbReference type="HAMAP" id="MF_00564">
    <property type="entry name" value="RNase_PH"/>
    <property type="match status" value="1"/>
</dbReference>
<dbReference type="InterPro" id="IPR001247">
    <property type="entry name" value="ExoRNase_PH_dom1"/>
</dbReference>
<dbReference type="InterPro" id="IPR015847">
    <property type="entry name" value="ExoRNase_PH_dom2"/>
</dbReference>
<dbReference type="InterPro" id="IPR036345">
    <property type="entry name" value="ExoRNase_PH_dom2_sf"/>
</dbReference>
<dbReference type="InterPro" id="IPR027408">
    <property type="entry name" value="PNPase/RNase_PH_dom_sf"/>
</dbReference>
<dbReference type="InterPro" id="IPR020568">
    <property type="entry name" value="Ribosomal_Su5_D2-typ_SF"/>
</dbReference>
<dbReference type="InterPro" id="IPR050080">
    <property type="entry name" value="RNase_PH"/>
</dbReference>
<dbReference type="InterPro" id="IPR002381">
    <property type="entry name" value="RNase_PH_bac-type"/>
</dbReference>
<dbReference type="InterPro" id="IPR018336">
    <property type="entry name" value="RNase_PH_CS"/>
</dbReference>
<dbReference type="NCBIfam" id="TIGR01966">
    <property type="entry name" value="RNasePH"/>
    <property type="match status" value="1"/>
</dbReference>
<dbReference type="PANTHER" id="PTHR11953">
    <property type="entry name" value="EXOSOME COMPLEX COMPONENT"/>
    <property type="match status" value="1"/>
</dbReference>
<dbReference type="PANTHER" id="PTHR11953:SF0">
    <property type="entry name" value="EXOSOME COMPLEX COMPONENT RRP41"/>
    <property type="match status" value="1"/>
</dbReference>
<dbReference type="Pfam" id="PF01138">
    <property type="entry name" value="RNase_PH"/>
    <property type="match status" value="1"/>
</dbReference>
<dbReference type="Pfam" id="PF03725">
    <property type="entry name" value="RNase_PH_C"/>
    <property type="match status" value="1"/>
</dbReference>
<dbReference type="SUPFAM" id="SSF55666">
    <property type="entry name" value="Ribonuclease PH domain 2-like"/>
    <property type="match status" value="1"/>
</dbReference>
<dbReference type="SUPFAM" id="SSF54211">
    <property type="entry name" value="Ribosomal protein S5 domain 2-like"/>
    <property type="match status" value="1"/>
</dbReference>
<dbReference type="PROSITE" id="PS01277">
    <property type="entry name" value="RIBONUCLEASE_PH"/>
    <property type="match status" value="1"/>
</dbReference>
<reference key="1">
    <citation type="journal article" date="2008" name="BMC Genomics">
        <title>Genomics of an extreme psychrophile, Psychromonas ingrahamii.</title>
        <authorList>
            <person name="Riley M."/>
            <person name="Staley J.T."/>
            <person name="Danchin A."/>
            <person name="Wang T.Z."/>
            <person name="Brettin T.S."/>
            <person name="Hauser L.J."/>
            <person name="Land M.L."/>
            <person name="Thompson L.S."/>
        </authorList>
    </citation>
    <scope>NUCLEOTIDE SEQUENCE [LARGE SCALE GENOMIC DNA]</scope>
    <source>
        <strain>DSM 17664 / CCUG 51855 / 37</strain>
    </source>
</reference>
<comment type="function">
    <text evidence="1">Phosphorolytic 3'-5' exoribonuclease that plays an important role in tRNA 3'-end maturation. Removes nucleotide residues following the 3'-CCA terminus of tRNAs; can also add nucleotides to the ends of RNA molecules by using nucleoside diphosphates as substrates, but this may not be physiologically important. Probably plays a role in initiation of 16S rRNA degradation (leading to ribosome degradation) during starvation.</text>
</comment>
<comment type="catalytic activity">
    <reaction evidence="1">
        <text>tRNA(n+1) + phosphate = tRNA(n) + a ribonucleoside 5'-diphosphate</text>
        <dbReference type="Rhea" id="RHEA:10628"/>
        <dbReference type="Rhea" id="RHEA-COMP:17343"/>
        <dbReference type="Rhea" id="RHEA-COMP:17344"/>
        <dbReference type="ChEBI" id="CHEBI:43474"/>
        <dbReference type="ChEBI" id="CHEBI:57930"/>
        <dbReference type="ChEBI" id="CHEBI:173114"/>
        <dbReference type="EC" id="2.7.7.56"/>
    </reaction>
</comment>
<comment type="subunit">
    <text evidence="1">Homohexameric ring arranged as a trimer of dimers.</text>
</comment>
<comment type="similarity">
    <text evidence="1">Belongs to the RNase PH family.</text>
</comment>
<organism>
    <name type="scientific">Psychromonas ingrahamii (strain DSM 17664 / CCUG 51855 / 37)</name>
    <dbReference type="NCBI Taxonomy" id="357804"/>
    <lineage>
        <taxon>Bacteria</taxon>
        <taxon>Pseudomonadati</taxon>
        <taxon>Pseudomonadota</taxon>
        <taxon>Gammaproteobacteria</taxon>
        <taxon>Alteromonadales</taxon>
        <taxon>Psychromonadaceae</taxon>
        <taxon>Psychromonas</taxon>
    </lineage>
</organism>
<sequence length="239" mass="25693">MRPSNRTPEQNREIKITRHYTDYAEGSVLIEMGNTKVLCNASVSGSVPRFLKGKGKGWVTAEYAMLPRATHIRNMREAAKGKQGGRTLEIQRLIARSLRAAVDLNALGENMITVDCDVIQADGGTRTAAITGGCIALADALNWMVKKGKLKKSPLKQMIAAVSVGIYQGTPVCDLDYAEDSNAETDTNVVMTESGGLIEIQATAEDGAFSHEQLLSMLSLAKGGIEALVVEQKKALNAE</sequence>